<proteinExistence type="inferred from homology"/>
<comment type="function">
    <text evidence="2">GTP hydrolase that promotes the GTP-dependent binding of aminoacyl-tRNA to the A-site of ribosomes during protein biosynthesis.</text>
</comment>
<comment type="catalytic activity">
    <reaction evidence="2">
        <text>GTP + H2O = GDP + phosphate + H(+)</text>
        <dbReference type="Rhea" id="RHEA:19669"/>
        <dbReference type="ChEBI" id="CHEBI:15377"/>
        <dbReference type="ChEBI" id="CHEBI:15378"/>
        <dbReference type="ChEBI" id="CHEBI:37565"/>
        <dbReference type="ChEBI" id="CHEBI:43474"/>
        <dbReference type="ChEBI" id="CHEBI:58189"/>
        <dbReference type="EC" id="3.6.5.3"/>
    </reaction>
    <physiologicalReaction direction="left-to-right" evidence="2">
        <dbReference type="Rhea" id="RHEA:19670"/>
    </physiologicalReaction>
</comment>
<comment type="subunit">
    <text evidence="2">Monomer.</text>
</comment>
<comment type="subcellular location">
    <subcellularLocation>
        <location evidence="2">Cytoplasm</location>
    </subcellularLocation>
</comment>
<comment type="similarity">
    <text evidence="2">Belongs to the TRAFAC class translation factor GTPase superfamily. Classic translation factor GTPase family. EF-Tu/EF-1A subfamily.</text>
</comment>
<feature type="chain" id="PRO_0000337450" description="Elongation factor Tu">
    <location>
        <begin position="1"/>
        <end position="396"/>
    </location>
</feature>
<feature type="domain" description="tr-type G">
    <location>
        <begin position="11"/>
        <end position="205"/>
    </location>
</feature>
<feature type="region of interest" description="G1" evidence="1">
    <location>
        <begin position="20"/>
        <end position="27"/>
    </location>
</feature>
<feature type="region of interest" description="G2" evidence="1">
    <location>
        <begin position="61"/>
        <end position="65"/>
    </location>
</feature>
<feature type="region of interest" description="G3" evidence="1">
    <location>
        <begin position="82"/>
        <end position="85"/>
    </location>
</feature>
<feature type="region of interest" description="G4" evidence="1">
    <location>
        <begin position="137"/>
        <end position="140"/>
    </location>
</feature>
<feature type="region of interest" description="G5" evidence="1">
    <location>
        <begin position="175"/>
        <end position="177"/>
    </location>
</feature>
<feature type="binding site" evidence="2">
    <location>
        <begin position="20"/>
        <end position="27"/>
    </location>
    <ligand>
        <name>GTP</name>
        <dbReference type="ChEBI" id="CHEBI:37565"/>
    </ligand>
</feature>
<feature type="binding site" evidence="2">
    <location>
        <position position="27"/>
    </location>
    <ligand>
        <name>Mg(2+)</name>
        <dbReference type="ChEBI" id="CHEBI:18420"/>
    </ligand>
</feature>
<feature type="binding site" evidence="2">
    <location>
        <begin position="82"/>
        <end position="86"/>
    </location>
    <ligand>
        <name>GTP</name>
        <dbReference type="ChEBI" id="CHEBI:37565"/>
    </ligand>
</feature>
<feature type="binding site" evidence="2">
    <location>
        <begin position="137"/>
        <end position="140"/>
    </location>
    <ligand>
        <name>GTP</name>
        <dbReference type="ChEBI" id="CHEBI:37565"/>
    </ligand>
</feature>
<accession>Q04FQ4</accession>
<protein>
    <recommendedName>
        <fullName evidence="2">Elongation factor Tu</fullName>
        <shortName evidence="2">EF-Tu</shortName>
        <ecNumber evidence="2">3.6.5.3</ecNumber>
    </recommendedName>
</protein>
<evidence type="ECO:0000250" key="1"/>
<evidence type="ECO:0000255" key="2">
    <source>
        <dbReference type="HAMAP-Rule" id="MF_00118"/>
    </source>
</evidence>
<organism>
    <name type="scientific">Oenococcus oeni (strain ATCC BAA-331 / PSU-1)</name>
    <dbReference type="NCBI Taxonomy" id="203123"/>
    <lineage>
        <taxon>Bacteria</taxon>
        <taxon>Bacillati</taxon>
        <taxon>Bacillota</taxon>
        <taxon>Bacilli</taxon>
        <taxon>Lactobacillales</taxon>
        <taxon>Lactobacillaceae</taxon>
        <taxon>Oenococcus</taxon>
    </lineage>
</organism>
<gene>
    <name evidence="2" type="primary">tuf</name>
    <name type="ordered locus">OEOE_0792</name>
</gene>
<dbReference type="EC" id="3.6.5.3" evidence="2"/>
<dbReference type="EMBL" id="CP000411">
    <property type="protein sequence ID" value="ABJ56718.1"/>
    <property type="molecule type" value="Genomic_DNA"/>
</dbReference>
<dbReference type="SMR" id="Q04FQ4"/>
<dbReference type="STRING" id="203123.OEOE_0792"/>
<dbReference type="KEGG" id="ooe:OEOE_0792"/>
<dbReference type="eggNOG" id="COG0050">
    <property type="taxonomic scope" value="Bacteria"/>
</dbReference>
<dbReference type="HOGENOM" id="CLU_007265_0_1_9"/>
<dbReference type="Proteomes" id="UP000000774">
    <property type="component" value="Chromosome"/>
</dbReference>
<dbReference type="GO" id="GO:0005829">
    <property type="term" value="C:cytosol"/>
    <property type="evidence" value="ECO:0007669"/>
    <property type="project" value="TreeGrafter"/>
</dbReference>
<dbReference type="GO" id="GO:0005525">
    <property type="term" value="F:GTP binding"/>
    <property type="evidence" value="ECO:0007669"/>
    <property type="project" value="UniProtKB-UniRule"/>
</dbReference>
<dbReference type="GO" id="GO:0003924">
    <property type="term" value="F:GTPase activity"/>
    <property type="evidence" value="ECO:0007669"/>
    <property type="project" value="InterPro"/>
</dbReference>
<dbReference type="GO" id="GO:0003746">
    <property type="term" value="F:translation elongation factor activity"/>
    <property type="evidence" value="ECO:0007669"/>
    <property type="project" value="UniProtKB-UniRule"/>
</dbReference>
<dbReference type="CDD" id="cd01884">
    <property type="entry name" value="EF_Tu"/>
    <property type="match status" value="1"/>
</dbReference>
<dbReference type="CDD" id="cd03697">
    <property type="entry name" value="EFTU_II"/>
    <property type="match status" value="1"/>
</dbReference>
<dbReference type="CDD" id="cd03707">
    <property type="entry name" value="EFTU_III"/>
    <property type="match status" value="1"/>
</dbReference>
<dbReference type="FunFam" id="2.40.30.10:FF:000001">
    <property type="entry name" value="Elongation factor Tu"/>
    <property type="match status" value="1"/>
</dbReference>
<dbReference type="FunFam" id="3.40.50.300:FF:000003">
    <property type="entry name" value="Elongation factor Tu"/>
    <property type="match status" value="1"/>
</dbReference>
<dbReference type="Gene3D" id="3.40.50.300">
    <property type="entry name" value="P-loop containing nucleotide triphosphate hydrolases"/>
    <property type="match status" value="1"/>
</dbReference>
<dbReference type="Gene3D" id="2.40.30.10">
    <property type="entry name" value="Translation factors"/>
    <property type="match status" value="2"/>
</dbReference>
<dbReference type="HAMAP" id="MF_00118_B">
    <property type="entry name" value="EF_Tu_B"/>
    <property type="match status" value="1"/>
</dbReference>
<dbReference type="InterPro" id="IPR041709">
    <property type="entry name" value="EF-Tu_GTP-bd"/>
</dbReference>
<dbReference type="InterPro" id="IPR050055">
    <property type="entry name" value="EF-Tu_GTPase"/>
</dbReference>
<dbReference type="InterPro" id="IPR004161">
    <property type="entry name" value="EFTu-like_2"/>
</dbReference>
<dbReference type="InterPro" id="IPR033720">
    <property type="entry name" value="EFTU_2"/>
</dbReference>
<dbReference type="InterPro" id="IPR031157">
    <property type="entry name" value="G_TR_CS"/>
</dbReference>
<dbReference type="InterPro" id="IPR027417">
    <property type="entry name" value="P-loop_NTPase"/>
</dbReference>
<dbReference type="InterPro" id="IPR005225">
    <property type="entry name" value="Small_GTP-bd"/>
</dbReference>
<dbReference type="InterPro" id="IPR000795">
    <property type="entry name" value="T_Tr_GTP-bd_dom"/>
</dbReference>
<dbReference type="InterPro" id="IPR009000">
    <property type="entry name" value="Transl_B-barrel_sf"/>
</dbReference>
<dbReference type="InterPro" id="IPR009001">
    <property type="entry name" value="Transl_elong_EF1A/Init_IF2_C"/>
</dbReference>
<dbReference type="InterPro" id="IPR004541">
    <property type="entry name" value="Transl_elong_EFTu/EF1A_bac/org"/>
</dbReference>
<dbReference type="InterPro" id="IPR004160">
    <property type="entry name" value="Transl_elong_EFTu/EF1A_C"/>
</dbReference>
<dbReference type="NCBIfam" id="TIGR00485">
    <property type="entry name" value="EF-Tu"/>
    <property type="match status" value="1"/>
</dbReference>
<dbReference type="NCBIfam" id="NF000766">
    <property type="entry name" value="PRK00049.1"/>
    <property type="match status" value="1"/>
</dbReference>
<dbReference type="NCBIfam" id="NF009372">
    <property type="entry name" value="PRK12735.1"/>
    <property type="match status" value="1"/>
</dbReference>
<dbReference type="NCBIfam" id="NF009373">
    <property type="entry name" value="PRK12736.1"/>
    <property type="match status" value="1"/>
</dbReference>
<dbReference type="NCBIfam" id="TIGR00231">
    <property type="entry name" value="small_GTP"/>
    <property type="match status" value="1"/>
</dbReference>
<dbReference type="PANTHER" id="PTHR43721:SF22">
    <property type="entry name" value="ELONGATION FACTOR TU, MITOCHONDRIAL"/>
    <property type="match status" value="1"/>
</dbReference>
<dbReference type="PANTHER" id="PTHR43721">
    <property type="entry name" value="ELONGATION FACTOR TU-RELATED"/>
    <property type="match status" value="1"/>
</dbReference>
<dbReference type="Pfam" id="PF00009">
    <property type="entry name" value="GTP_EFTU"/>
    <property type="match status" value="1"/>
</dbReference>
<dbReference type="Pfam" id="PF03144">
    <property type="entry name" value="GTP_EFTU_D2"/>
    <property type="match status" value="1"/>
</dbReference>
<dbReference type="Pfam" id="PF03143">
    <property type="entry name" value="GTP_EFTU_D3"/>
    <property type="match status" value="1"/>
</dbReference>
<dbReference type="PRINTS" id="PR00315">
    <property type="entry name" value="ELONGATNFCT"/>
</dbReference>
<dbReference type="SUPFAM" id="SSF50465">
    <property type="entry name" value="EF-Tu/eEF-1alpha/eIF2-gamma C-terminal domain"/>
    <property type="match status" value="1"/>
</dbReference>
<dbReference type="SUPFAM" id="SSF52540">
    <property type="entry name" value="P-loop containing nucleoside triphosphate hydrolases"/>
    <property type="match status" value="1"/>
</dbReference>
<dbReference type="SUPFAM" id="SSF50447">
    <property type="entry name" value="Translation proteins"/>
    <property type="match status" value="1"/>
</dbReference>
<dbReference type="PROSITE" id="PS00301">
    <property type="entry name" value="G_TR_1"/>
    <property type="match status" value="1"/>
</dbReference>
<dbReference type="PROSITE" id="PS51722">
    <property type="entry name" value="G_TR_2"/>
    <property type="match status" value="1"/>
</dbReference>
<sequence>MAEKEHYERTKPHVNIGTIGHVDHGKTTLTAAITKVLSEKGLAQAQDYASIDAAPEERERGITINTAHVEYETDKRHYAHIDAPGHADYVKNMITGAAQMDGAILVVAATDGPMPQTREHILLARQVGVNYIVVFLNKTDLVDDPELIDLVEMEVRELLSEYDFPGDDIPIIRGSALKALQGDPEQEKVILHLMDVIDEYIPTPVRDVDKPFLMPVEDVFTITGRGTVASGRIDRGTVKINDPVEIVGLKDEVKNTVVTGVEMFRKTLDLGEAGDNIGALLRGIDRDGVERGQVLAKPGSIQTHKKFKGEVYILTKEEGGRHTPFFTNYRPQFYFHTTDVTGVVELPEGVEMVMPGDHVTFTVELMKPVAIEKGLKFTIREGGHTVGAGTVSEIDD</sequence>
<name>EFTU_OENOB</name>
<reference key="1">
    <citation type="journal article" date="2006" name="Proc. Natl. Acad. Sci. U.S.A.">
        <title>Comparative genomics of the lactic acid bacteria.</title>
        <authorList>
            <person name="Makarova K.S."/>
            <person name="Slesarev A."/>
            <person name="Wolf Y.I."/>
            <person name="Sorokin A."/>
            <person name="Mirkin B."/>
            <person name="Koonin E.V."/>
            <person name="Pavlov A."/>
            <person name="Pavlova N."/>
            <person name="Karamychev V."/>
            <person name="Polouchine N."/>
            <person name="Shakhova V."/>
            <person name="Grigoriev I."/>
            <person name="Lou Y."/>
            <person name="Rohksar D."/>
            <person name="Lucas S."/>
            <person name="Huang K."/>
            <person name="Goodstein D.M."/>
            <person name="Hawkins T."/>
            <person name="Plengvidhya V."/>
            <person name="Welker D."/>
            <person name="Hughes J."/>
            <person name="Goh Y."/>
            <person name="Benson A."/>
            <person name="Baldwin K."/>
            <person name="Lee J.-H."/>
            <person name="Diaz-Muniz I."/>
            <person name="Dosti B."/>
            <person name="Smeianov V."/>
            <person name="Wechter W."/>
            <person name="Barabote R."/>
            <person name="Lorca G."/>
            <person name="Altermann E."/>
            <person name="Barrangou R."/>
            <person name="Ganesan B."/>
            <person name="Xie Y."/>
            <person name="Rawsthorne H."/>
            <person name="Tamir D."/>
            <person name="Parker C."/>
            <person name="Breidt F."/>
            <person name="Broadbent J.R."/>
            <person name="Hutkins R."/>
            <person name="O'Sullivan D."/>
            <person name="Steele J."/>
            <person name="Unlu G."/>
            <person name="Saier M.H. Jr."/>
            <person name="Klaenhammer T."/>
            <person name="Richardson P."/>
            <person name="Kozyavkin S."/>
            <person name="Weimer B.C."/>
            <person name="Mills D.A."/>
        </authorList>
    </citation>
    <scope>NUCLEOTIDE SEQUENCE [LARGE SCALE GENOMIC DNA]</scope>
    <source>
        <strain>ATCC BAA-331 / PSU-1</strain>
    </source>
</reference>
<keyword id="KW-0963">Cytoplasm</keyword>
<keyword id="KW-0251">Elongation factor</keyword>
<keyword id="KW-0342">GTP-binding</keyword>
<keyword id="KW-0378">Hydrolase</keyword>
<keyword id="KW-0460">Magnesium</keyword>
<keyword id="KW-0479">Metal-binding</keyword>
<keyword id="KW-0547">Nucleotide-binding</keyword>
<keyword id="KW-0648">Protein biosynthesis</keyword>
<keyword id="KW-1185">Reference proteome</keyword>